<evidence type="ECO:0000256" key="1">
    <source>
        <dbReference type="SAM" id="MobiDB-lite"/>
    </source>
</evidence>
<evidence type="ECO:0000269" key="2">
    <source>
    </source>
</evidence>
<evidence type="ECO:0000305" key="3"/>
<evidence type="ECO:0007744" key="4">
    <source>
    </source>
</evidence>
<evidence type="ECO:0007829" key="5">
    <source>
        <dbReference type="PDB" id="3UPV"/>
    </source>
</evidence>
<protein>
    <recommendedName>
        <fullName>Heat shock protein SSA4</fullName>
    </recommendedName>
</protein>
<dbReference type="EMBL" id="J05637">
    <property type="protein sequence ID" value="AAA63574.1"/>
    <property type="molecule type" value="Genomic_DNA"/>
</dbReference>
<dbReference type="EMBL" id="U18839">
    <property type="protein sequence ID" value="AAB64658.1"/>
    <property type="molecule type" value="Genomic_DNA"/>
</dbReference>
<dbReference type="EMBL" id="BK006939">
    <property type="protein sequence ID" value="DAA07764.1"/>
    <property type="molecule type" value="Genomic_DNA"/>
</dbReference>
<dbReference type="PIR" id="B36590">
    <property type="entry name" value="B36590"/>
</dbReference>
<dbReference type="RefSeq" id="NP_011029.3">
    <property type="nucleotide sequence ID" value="NM_001178994.3"/>
</dbReference>
<dbReference type="PDB" id="3UPV">
    <property type="method" value="X-ray"/>
    <property type="resolution" value="1.60 A"/>
    <property type="chains" value="B=636-642"/>
</dbReference>
<dbReference type="PDBsum" id="3UPV"/>
<dbReference type="SMR" id="P22202"/>
<dbReference type="BioGRID" id="36849">
    <property type="interactions" value="146"/>
</dbReference>
<dbReference type="DIP" id="DIP-3916N"/>
<dbReference type="FunCoup" id="P22202">
    <property type="interactions" value="1344"/>
</dbReference>
<dbReference type="IntAct" id="P22202">
    <property type="interactions" value="67"/>
</dbReference>
<dbReference type="MINT" id="P22202"/>
<dbReference type="STRING" id="4932.YER103W"/>
<dbReference type="GlyGen" id="P22202">
    <property type="glycosylation" value="1 site"/>
</dbReference>
<dbReference type="iPTMnet" id="P22202"/>
<dbReference type="PaxDb" id="4932-YER103W"/>
<dbReference type="PeptideAtlas" id="P22202"/>
<dbReference type="EnsemblFungi" id="YER103W_mRNA">
    <property type="protein sequence ID" value="YER103W"/>
    <property type="gene ID" value="YER103W"/>
</dbReference>
<dbReference type="GeneID" id="856840"/>
<dbReference type="KEGG" id="sce:YER103W"/>
<dbReference type="AGR" id="SGD:S000000905"/>
<dbReference type="SGD" id="S000000905">
    <property type="gene designation" value="SSA4"/>
</dbReference>
<dbReference type="VEuPathDB" id="FungiDB:YER103W"/>
<dbReference type="eggNOG" id="KOG0101">
    <property type="taxonomic scope" value="Eukaryota"/>
</dbReference>
<dbReference type="GeneTree" id="ENSGT00940000176322"/>
<dbReference type="HOGENOM" id="CLU_005965_3_2_1"/>
<dbReference type="InParanoid" id="P22202"/>
<dbReference type="OMA" id="MTQNQRA"/>
<dbReference type="OrthoDB" id="2401965at2759"/>
<dbReference type="BioCyc" id="YEAST:G3O-30268-MONOMER"/>
<dbReference type="Reactome" id="R-SCE-3371453">
    <property type="pathway name" value="Regulation of HSF1-mediated heat shock response"/>
</dbReference>
<dbReference type="Reactome" id="R-SCE-3371497">
    <property type="pathway name" value="HSP90 chaperone cycle for steroid hormone receptors (SHR) in the presence of ligand"/>
</dbReference>
<dbReference type="Reactome" id="R-SCE-3371571">
    <property type="pathway name" value="HSF1-dependent transactivation"/>
</dbReference>
<dbReference type="Reactome" id="R-SCE-6798695">
    <property type="pathway name" value="Neutrophil degranulation"/>
</dbReference>
<dbReference type="Reactome" id="R-SCE-9841251">
    <property type="pathway name" value="Mitochondrial unfolded protein response (UPRmt)"/>
</dbReference>
<dbReference type="BioGRID-ORCS" id="856840">
    <property type="hits" value="6 hits in 10 CRISPR screens"/>
</dbReference>
<dbReference type="EvolutionaryTrace" id="P22202"/>
<dbReference type="PRO" id="PR:P22202"/>
<dbReference type="Proteomes" id="UP000002311">
    <property type="component" value="Chromosome V"/>
</dbReference>
<dbReference type="RNAct" id="P22202">
    <property type="molecule type" value="protein"/>
</dbReference>
<dbReference type="GO" id="GO:0005737">
    <property type="term" value="C:cytoplasm"/>
    <property type="evidence" value="ECO:0000314"/>
    <property type="project" value="SGD"/>
</dbReference>
<dbReference type="GO" id="GO:0005829">
    <property type="term" value="C:cytosol"/>
    <property type="evidence" value="ECO:0000318"/>
    <property type="project" value="GO_Central"/>
</dbReference>
<dbReference type="GO" id="GO:0005634">
    <property type="term" value="C:nucleus"/>
    <property type="evidence" value="ECO:0000314"/>
    <property type="project" value="SGD"/>
</dbReference>
<dbReference type="GO" id="GO:0005886">
    <property type="term" value="C:plasma membrane"/>
    <property type="evidence" value="ECO:0000318"/>
    <property type="project" value="GO_Central"/>
</dbReference>
<dbReference type="GO" id="GO:0005524">
    <property type="term" value="F:ATP binding"/>
    <property type="evidence" value="ECO:0007669"/>
    <property type="project" value="UniProtKB-KW"/>
</dbReference>
<dbReference type="GO" id="GO:0016887">
    <property type="term" value="F:ATP hydrolysis activity"/>
    <property type="evidence" value="ECO:0000318"/>
    <property type="project" value="GO_Central"/>
</dbReference>
<dbReference type="GO" id="GO:0140662">
    <property type="term" value="F:ATP-dependent protein folding chaperone"/>
    <property type="evidence" value="ECO:0007669"/>
    <property type="project" value="InterPro"/>
</dbReference>
<dbReference type="GO" id="GO:0031072">
    <property type="term" value="F:heat shock protein binding"/>
    <property type="evidence" value="ECO:0000318"/>
    <property type="project" value="GO_Central"/>
</dbReference>
<dbReference type="GO" id="GO:0044183">
    <property type="term" value="F:protein folding chaperone"/>
    <property type="evidence" value="ECO:0000318"/>
    <property type="project" value="GO_Central"/>
</dbReference>
<dbReference type="GO" id="GO:0051082">
    <property type="term" value="F:unfolded protein binding"/>
    <property type="evidence" value="ECO:0000316"/>
    <property type="project" value="SGD"/>
</dbReference>
<dbReference type="GO" id="GO:0051085">
    <property type="term" value="P:chaperone cofactor-dependent protein refolding"/>
    <property type="evidence" value="ECO:0000318"/>
    <property type="project" value="GO_Central"/>
</dbReference>
<dbReference type="GO" id="GO:0006457">
    <property type="term" value="P:protein folding"/>
    <property type="evidence" value="ECO:0000316"/>
    <property type="project" value="SGD"/>
</dbReference>
<dbReference type="GO" id="GO:0042026">
    <property type="term" value="P:protein refolding"/>
    <property type="evidence" value="ECO:0000318"/>
    <property type="project" value="GO_Central"/>
</dbReference>
<dbReference type="GO" id="GO:0006616">
    <property type="term" value="P:SRP-dependent cotranslational protein targeting to membrane, translocation"/>
    <property type="evidence" value="ECO:0000315"/>
    <property type="project" value="SGD"/>
</dbReference>
<dbReference type="CDD" id="cd10233">
    <property type="entry name" value="ASKHA_NBD_HSP70_HSPA1"/>
    <property type="match status" value="1"/>
</dbReference>
<dbReference type="FunFam" id="1.20.1270.10:FF:000009">
    <property type="entry name" value="DnaK-type molecular chaperone BiP"/>
    <property type="match status" value="1"/>
</dbReference>
<dbReference type="FunFam" id="2.60.34.10:FF:000002">
    <property type="entry name" value="Heat shock 70 kDa"/>
    <property type="match status" value="1"/>
</dbReference>
<dbReference type="FunFam" id="3.30.420.40:FF:000172">
    <property type="entry name" value="Heat shock 70 kDa protein"/>
    <property type="match status" value="1"/>
</dbReference>
<dbReference type="FunFam" id="3.90.640.10:FF:000058">
    <property type="entry name" value="Heat shock 70 kDa protein"/>
    <property type="match status" value="1"/>
</dbReference>
<dbReference type="FunFam" id="3.30.30.30:FF:000001">
    <property type="entry name" value="heat shock 70 kDa protein-like"/>
    <property type="match status" value="1"/>
</dbReference>
<dbReference type="FunFam" id="3.30.420.40:FF:000135">
    <property type="entry name" value="Heat shock cognate 71 kDa protein"/>
    <property type="match status" value="1"/>
</dbReference>
<dbReference type="FunFam" id="3.30.420.40:FF:000026">
    <property type="entry name" value="Heat shock protein 70"/>
    <property type="match status" value="1"/>
</dbReference>
<dbReference type="Gene3D" id="1.20.1270.10">
    <property type="match status" value="1"/>
</dbReference>
<dbReference type="Gene3D" id="3.30.30.30">
    <property type="match status" value="1"/>
</dbReference>
<dbReference type="Gene3D" id="3.30.420.40">
    <property type="match status" value="2"/>
</dbReference>
<dbReference type="Gene3D" id="3.90.640.10">
    <property type="entry name" value="Actin, Chain A, domain 4"/>
    <property type="match status" value="1"/>
</dbReference>
<dbReference type="Gene3D" id="2.60.34.10">
    <property type="entry name" value="Substrate Binding Domain Of DNAk, Chain A, domain 1"/>
    <property type="match status" value="1"/>
</dbReference>
<dbReference type="IDEAL" id="IID50203"/>
<dbReference type="InterPro" id="IPR043129">
    <property type="entry name" value="ATPase_NBD"/>
</dbReference>
<dbReference type="InterPro" id="IPR018181">
    <property type="entry name" value="Heat_shock_70_CS"/>
</dbReference>
<dbReference type="InterPro" id="IPR029048">
    <property type="entry name" value="HSP70_C_sf"/>
</dbReference>
<dbReference type="InterPro" id="IPR029047">
    <property type="entry name" value="HSP70_peptide-bd_sf"/>
</dbReference>
<dbReference type="InterPro" id="IPR013126">
    <property type="entry name" value="Hsp_70_fam"/>
</dbReference>
<dbReference type="NCBIfam" id="NF001413">
    <property type="entry name" value="PRK00290.1"/>
    <property type="match status" value="1"/>
</dbReference>
<dbReference type="PANTHER" id="PTHR19375">
    <property type="entry name" value="HEAT SHOCK PROTEIN 70KDA"/>
    <property type="match status" value="1"/>
</dbReference>
<dbReference type="Pfam" id="PF00012">
    <property type="entry name" value="HSP70"/>
    <property type="match status" value="1"/>
</dbReference>
<dbReference type="PRINTS" id="PR00301">
    <property type="entry name" value="HEATSHOCK70"/>
</dbReference>
<dbReference type="SUPFAM" id="SSF53067">
    <property type="entry name" value="Actin-like ATPase domain"/>
    <property type="match status" value="2"/>
</dbReference>
<dbReference type="SUPFAM" id="SSF100934">
    <property type="entry name" value="Heat shock protein 70kD (HSP70), C-terminal subdomain"/>
    <property type="match status" value="1"/>
</dbReference>
<dbReference type="SUPFAM" id="SSF100920">
    <property type="entry name" value="Heat shock protein 70kD (HSP70), peptide-binding domain"/>
    <property type="match status" value="1"/>
</dbReference>
<dbReference type="PROSITE" id="PS00297">
    <property type="entry name" value="HSP70_1"/>
    <property type="match status" value="1"/>
</dbReference>
<dbReference type="PROSITE" id="PS00329">
    <property type="entry name" value="HSP70_2"/>
    <property type="match status" value="1"/>
</dbReference>
<dbReference type="PROSITE" id="PS01036">
    <property type="entry name" value="HSP70_3"/>
    <property type="match status" value="1"/>
</dbReference>
<accession>P22202</accession>
<accession>D3DM10</accession>
<reference key="1">
    <citation type="journal article" date="1990" name="J. Biol. Chem.">
        <title>Structure and regulation of the SSA4 HSP70 gene of Saccharomyces cerevisiae.</title>
        <authorList>
            <person name="Boorstein W.R."/>
            <person name="Craig E.A."/>
        </authorList>
    </citation>
    <scope>NUCLEOTIDE SEQUENCE [GENOMIC DNA]</scope>
    <source>
        <strain>DS10</strain>
    </source>
</reference>
<reference key="2">
    <citation type="journal article" date="1997" name="Nature">
        <title>The nucleotide sequence of Saccharomyces cerevisiae chromosome V.</title>
        <authorList>
            <person name="Dietrich F.S."/>
            <person name="Mulligan J.T."/>
            <person name="Hennessy K.M."/>
            <person name="Yelton M.A."/>
            <person name="Allen E."/>
            <person name="Araujo R."/>
            <person name="Aviles E."/>
            <person name="Berno A."/>
            <person name="Brennan T."/>
            <person name="Carpenter J."/>
            <person name="Chen E."/>
            <person name="Cherry J.M."/>
            <person name="Chung E."/>
            <person name="Duncan M."/>
            <person name="Guzman E."/>
            <person name="Hartzell G."/>
            <person name="Hunicke-Smith S."/>
            <person name="Hyman R.W."/>
            <person name="Kayser A."/>
            <person name="Komp C."/>
            <person name="Lashkari D."/>
            <person name="Lew H."/>
            <person name="Lin D."/>
            <person name="Mosedale D."/>
            <person name="Nakahara K."/>
            <person name="Namath A."/>
            <person name="Norgren R."/>
            <person name="Oefner P."/>
            <person name="Oh C."/>
            <person name="Petel F.X."/>
            <person name="Roberts D."/>
            <person name="Sehl P."/>
            <person name="Schramm S."/>
            <person name="Shogren T."/>
            <person name="Smith V."/>
            <person name="Taylor P."/>
            <person name="Wei Y."/>
            <person name="Botstein D."/>
            <person name="Davis R.W."/>
        </authorList>
    </citation>
    <scope>NUCLEOTIDE SEQUENCE [LARGE SCALE GENOMIC DNA]</scope>
    <source>
        <strain>ATCC 204508 / S288c</strain>
    </source>
</reference>
<reference key="3">
    <citation type="journal article" date="2014" name="G3 (Bethesda)">
        <title>The reference genome sequence of Saccharomyces cerevisiae: Then and now.</title>
        <authorList>
            <person name="Engel S.R."/>
            <person name="Dietrich F.S."/>
            <person name="Fisk D.G."/>
            <person name="Binkley G."/>
            <person name="Balakrishnan R."/>
            <person name="Costanzo M.C."/>
            <person name="Dwight S.S."/>
            <person name="Hitz B.C."/>
            <person name="Karra K."/>
            <person name="Nash R.S."/>
            <person name="Weng S."/>
            <person name="Wong E.D."/>
            <person name="Lloyd P."/>
            <person name="Skrzypek M.S."/>
            <person name="Miyasato S.R."/>
            <person name="Simison M."/>
            <person name="Cherry J.M."/>
        </authorList>
    </citation>
    <scope>GENOME REANNOTATION</scope>
    <source>
        <strain>ATCC 204508 / S288c</strain>
    </source>
</reference>
<reference key="4">
    <citation type="journal article" date="2003" name="Nature">
        <title>Global analysis of protein expression in yeast.</title>
        <authorList>
            <person name="Ghaemmaghami S."/>
            <person name="Huh W.-K."/>
            <person name="Bower K."/>
            <person name="Howson R.W."/>
            <person name="Belle A."/>
            <person name="Dephoure N."/>
            <person name="O'Shea E.K."/>
            <person name="Weissman J.S."/>
        </authorList>
    </citation>
    <scope>LEVEL OF PROTEIN EXPRESSION [LARGE SCALE ANALYSIS]</scope>
</reference>
<reference key="5">
    <citation type="journal article" date="2008" name="Mol. Cell. Proteomics">
        <title>A multidimensional chromatography technology for in-depth phosphoproteome analysis.</title>
        <authorList>
            <person name="Albuquerque C.P."/>
            <person name="Smolka M.B."/>
            <person name="Payne S.H."/>
            <person name="Bafna V."/>
            <person name="Eng J."/>
            <person name="Zhou H."/>
        </authorList>
    </citation>
    <scope>PHOSPHORYLATION [LARGE SCALE ANALYSIS] AT SER-552</scope>
    <scope>IDENTIFICATION BY MASS SPECTROMETRY [LARGE SCALE ANALYSIS]</scope>
</reference>
<comment type="interaction">
    <interactant intactId="EBI-8621">
        <id>P22202</id>
    </interactant>
    <interactant intactId="EBI-17244">
        <id>P25294</id>
        <label>SIS1</label>
    </interactant>
    <organismsDiffer>false</organismsDiffer>
    <experiments>2</experiments>
</comment>
<comment type="subcellular location">
    <subcellularLocation>
        <location>Cytoplasm</location>
    </subcellularLocation>
</comment>
<comment type="induction">
    <text>HSP SSA4 expression is restricted to conditions of stress.</text>
</comment>
<comment type="miscellaneous">
    <text evidence="2">Present with 17900 molecules/cell in log phase SD medium.</text>
</comment>
<comment type="similarity">
    <text evidence="3">Belongs to the heat shock protein 70 family.</text>
</comment>
<sequence>MSKAVGIDLGTTYSCVAHFANDRVEIIANDQGNRTTPSYVAFTDTERLIGDAAKNQAAMNPHNTVFDAKRLIGRKFDDPEVTNDAKHYPFKVIDKGGKPVVQVEYKGETKTFTPEEISSMILTKMKETAENFLGTEVKDAVVTVPAYFNDSQRQATKDAGTIAGLNVLRIINEPTAAAIAYGLDKKSQKEHNVLIFDLGGGTFDVSLLSIDEGVFEVKATAGDTHLGGEDFDSRLVNFLAEEFKRKNKKDLTTNQRSLRRLRTAAERAKRTLSSSAQTSIEIDSLFEGIDFYTSITRARFEELCADLFRSTLEPVEKVLADSKLDKSQIDEIVLVGGSTRIPKVQKLVSDFFNGKEPNRSINPDEAVAYGAAVQAAILTGDQSSTTQDLLLLDVAPLSLGIETAGGIMTKLIPRNSTIPTKKSEVFSTYADNQPGVLIQVFEGERTRTKDNNLLGKFELSGIPPAPRGVPQIEVTFDIDANGILNVSAVEKGTGKSNKITITNDKGRLSKEDIDKMVAEAEKFKAEDEQEAQRVQAKNQLESYAFTLKNSVSENNFKEKVGEEDARKLEAAAQDAINWLDASQAASTEEYKERQKELEGVANPIMSKFYGAAGGAPGAGPVPGAGAGPTGAPDNGPTVEEVD</sequence>
<keyword id="KW-0002">3D-structure</keyword>
<keyword id="KW-0067">ATP-binding</keyword>
<keyword id="KW-0963">Cytoplasm</keyword>
<keyword id="KW-0547">Nucleotide-binding</keyword>
<keyword id="KW-0597">Phosphoprotein</keyword>
<keyword id="KW-1185">Reference proteome</keyword>
<keyword id="KW-0346">Stress response</keyword>
<organism>
    <name type="scientific">Saccharomyces cerevisiae (strain ATCC 204508 / S288c)</name>
    <name type="common">Baker's yeast</name>
    <dbReference type="NCBI Taxonomy" id="559292"/>
    <lineage>
        <taxon>Eukaryota</taxon>
        <taxon>Fungi</taxon>
        <taxon>Dikarya</taxon>
        <taxon>Ascomycota</taxon>
        <taxon>Saccharomycotina</taxon>
        <taxon>Saccharomycetes</taxon>
        <taxon>Saccharomycetales</taxon>
        <taxon>Saccharomycetaceae</taxon>
        <taxon>Saccharomyces</taxon>
    </lineage>
</organism>
<feature type="chain" id="PRO_0000078388" description="Heat shock protein SSA4">
    <location>
        <begin position="1"/>
        <end position="642"/>
    </location>
</feature>
<feature type="region of interest" description="Disordered" evidence="1">
    <location>
        <begin position="608"/>
        <end position="642"/>
    </location>
</feature>
<feature type="compositionally biased region" description="Gly residues" evidence="1">
    <location>
        <begin position="611"/>
        <end position="628"/>
    </location>
</feature>
<feature type="modified residue" description="Phosphoserine" evidence="4">
    <location>
        <position position="552"/>
    </location>
</feature>
<feature type="helix" evidence="5">
    <location>
        <begin position="637"/>
        <end position="639"/>
    </location>
</feature>
<gene>
    <name type="primary">SSA4</name>
    <name type="ordered locus">YER103W</name>
</gene>
<proteinExistence type="evidence at protein level"/>
<name>HSP74_YEAST</name>